<reference key="1">
    <citation type="journal article" date="2006" name="Appl. Environ. Microbiol.">
        <title>Complete genome sequence of the marine, chemolithoautotrophic, ammonia-oxidizing bacterium Nitrosococcus oceani ATCC 19707.</title>
        <authorList>
            <person name="Klotz M.G."/>
            <person name="Arp D.J."/>
            <person name="Chain P.S.G."/>
            <person name="El-Sheikh A.F."/>
            <person name="Hauser L.J."/>
            <person name="Hommes N.G."/>
            <person name="Larimer F.W."/>
            <person name="Malfatti S.A."/>
            <person name="Norton J.M."/>
            <person name="Poret-Peterson A.T."/>
            <person name="Vergez L.M."/>
            <person name="Ward B.B."/>
        </authorList>
    </citation>
    <scope>NUCLEOTIDE SEQUENCE [LARGE SCALE GENOMIC DNA]</scope>
    <source>
        <strain>ATCC 19707 / BCRC 17464 / JCM 30415 / NCIMB 11848 / C-107</strain>
    </source>
</reference>
<protein>
    <recommendedName>
        <fullName evidence="1">Phosphate acyltransferase</fullName>
        <ecNumber evidence="1">2.3.1.274</ecNumber>
    </recommendedName>
    <alternativeName>
        <fullName evidence="1">Acyl-ACP phosphotransacylase</fullName>
    </alternativeName>
    <alternativeName>
        <fullName evidence="1">Acyl-[acyl-carrier-protein]--phosphate acyltransferase</fullName>
    </alternativeName>
    <alternativeName>
        <fullName evidence="1">Phosphate-acyl-ACP acyltransferase</fullName>
    </alternativeName>
</protein>
<dbReference type="EC" id="2.3.1.274" evidence="1"/>
<dbReference type="EMBL" id="CP000127">
    <property type="protein sequence ID" value="ABA58140.1"/>
    <property type="molecule type" value="Genomic_DNA"/>
</dbReference>
<dbReference type="SMR" id="Q3JAK6"/>
<dbReference type="FunCoup" id="Q3JAK6">
    <property type="interactions" value="318"/>
</dbReference>
<dbReference type="STRING" id="323261.Noc_1668"/>
<dbReference type="KEGG" id="noc:Noc_1668"/>
<dbReference type="eggNOG" id="COG0416">
    <property type="taxonomic scope" value="Bacteria"/>
</dbReference>
<dbReference type="HOGENOM" id="CLU_039379_1_0_6"/>
<dbReference type="InParanoid" id="Q3JAK6"/>
<dbReference type="UniPathway" id="UPA00085"/>
<dbReference type="Proteomes" id="UP000006838">
    <property type="component" value="Chromosome"/>
</dbReference>
<dbReference type="GO" id="GO:0005737">
    <property type="term" value="C:cytoplasm"/>
    <property type="evidence" value="ECO:0007669"/>
    <property type="project" value="UniProtKB-SubCell"/>
</dbReference>
<dbReference type="GO" id="GO:0043811">
    <property type="term" value="F:phosphate:acyl-[acyl carrier protein] acyltransferase activity"/>
    <property type="evidence" value="ECO:0007669"/>
    <property type="project" value="UniProtKB-UniRule"/>
</dbReference>
<dbReference type="GO" id="GO:0006633">
    <property type="term" value="P:fatty acid biosynthetic process"/>
    <property type="evidence" value="ECO:0007669"/>
    <property type="project" value="UniProtKB-UniRule"/>
</dbReference>
<dbReference type="GO" id="GO:0008654">
    <property type="term" value="P:phospholipid biosynthetic process"/>
    <property type="evidence" value="ECO:0007669"/>
    <property type="project" value="UniProtKB-KW"/>
</dbReference>
<dbReference type="Gene3D" id="3.40.718.10">
    <property type="entry name" value="Isopropylmalate Dehydrogenase"/>
    <property type="match status" value="1"/>
</dbReference>
<dbReference type="HAMAP" id="MF_00019">
    <property type="entry name" value="PlsX"/>
    <property type="match status" value="1"/>
</dbReference>
<dbReference type="InterPro" id="IPR003664">
    <property type="entry name" value="FA_synthesis"/>
</dbReference>
<dbReference type="InterPro" id="IPR012281">
    <property type="entry name" value="Phospholipid_synth_PlsX-like"/>
</dbReference>
<dbReference type="NCBIfam" id="TIGR00182">
    <property type="entry name" value="plsX"/>
    <property type="match status" value="1"/>
</dbReference>
<dbReference type="PANTHER" id="PTHR30100">
    <property type="entry name" value="FATTY ACID/PHOSPHOLIPID SYNTHESIS PROTEIN PLSX"/>
    <property type="match status" value="1"/>
</dbReference>
<dbReference type="PANTHER" id="PTHR30100:SF1">
    <property type="entry name" value="PHOSPHATE ACYLTRANSFERASE"/>
    <property type="match status" value="1"/>
</dbReference>
<dbReference type="Pfam" id="PF02504">
    <property type="entry name" value="FA_synthesis"/>
    <property type="match status" value="1"/>
</dbReference>
<dbReference type="PIRSF" id="PIRSF002465">
    <property type="entry name" value="Phsphlp_syn_PlsX"/>
    <property type="match status" value="1"/>
</dbReference>
<dbReference type="SUPFAM" id="SSF53659">
    <property type="entry name" value="Isocitrate/Isopropylmalate dehydrogenase-like"/>
    <property type="match status" value="1"/>
</dbReference>
<comment type="function">
    <text evidence="1">Catalyzes the reversible formation of acyl-phosphate (acyl-PO(4)) from acyl-[acyl-carrier-protein] (acyl-ACP). This enzyme utilizes acyl-ACP as fatty acyl donor, but not acyl-CoA.</text>
</comment>
<comment type="catalytic activity">
    <reaction evidence="1">
        <text>a fatty acyl-[ACP] + phosphate = an acyl phosphate + holo-[ACP]</text>
        <dbReference type="Rhea" id="RHEA:42292"/>
        <dbReference type="Rhea" id="RHEA-COMP:9685"/>
        <dbReference type="Rhea" id="RHEA-COMP:14125"/>
        <dbReference type="ChEBI" id="CHEBI:43474"/>
        <dbReference type="ChEBI" id="CHEBI:59918"/>
        <dbReference type="ChEBI" id="CHEBI:64479"/>
        <dbReference type="ChEBI" id="CHEBI:138651"/>
        <dbReference type="EC" id="2.3.1.274"/>
    </reaction>
</comment>
<comment type="pathway">
    <text evidence="1">Lipid metabolism; phospholipid metabolism.</text>
</comment>
<comment type="subunit">
    <text evidence="1">Homodimer. Probably interacts with PlsY.</text>
</comment>
<comment type="subcellular location">
    <subcellularLocation>
        <location evidence="1">Cytoplasm</location>
    </subcellularLocation>
    <text evidence="1">Associated with the membrane possibly through PlsY.</text>
</comment>
<comment type="similarity">
    <text evidence="1">Belongs to the PlsX family.</text>
</comment>
<gene>
    <name evidence="1" type="primary">plsX</name>
    <name type="ordered locus">Noc_1668</name>
</gene>
<organism>
    <name type="scientific">Nitrosococcus oceani (strain ATCC 19707 / BCRC 17464 / JCM 30415 / NCIMB 11848 / C-107)</name>
    <dbReference type="NCBI Taxonomy" id="323261"/>
    <lineage>
        <taxon>Bacteria</taxon>
        <taxon>Pseudomonadati</taxon>
        <taxon>Pseudomonadota</taxon>
        <taxon>Gammaproteobacteria</taxon>
        <taxon>Chromatiales</taxon>
        <taxon>Chromatiaceae</taxon>
        <taxon>Nitrosococcus</taxon>
    </lineage>
</organism>
<proteinExistence type="inferred from homology"/>
<feature type="chain" id="PRO_1000001794" description="Phosphate acyltransferase">
    <location>
        <begin position="1"/>
        <end position="340"/>
    </location>
</feature>
<sequence length="340" mass="36632">MSVTIALDAMGGDHGPQVVVPAALKVLAEMINVKLILIGDRDLLNGLVAIHRGELGTRLTIQHASQKVEMDEAPSQALRAKKDSSMRIAINLVKSRKADACVSAGNTGALMAIARFVLKTLPGIDRPAIVSALPTIRGHCYMLDLGANVDSSAQNLYQFALMGSVLASAIDNIKEPSVGLLNIGSEIIKGNERIKEAGRMLSQSHLNYVGFVEGNDVYEGCVDVVVCDGFVGNVALKSSEGVARMVRHYLRESFQRNYLTRFAGFLALPVLKAFHQRMDPRRYNGANLLGLNGVVIKSHGGADITAFAHAIRIAVIEARKDVPQHISAHLEPWLSEGQVV</sequence>
<name>PLSX_NITOC</name>
<evidence type="ECO:0000255" key="1">
    <source>
        <dbReference type="HAMAP-Rule" id="MF_00019"/>
    </source>
</evidence>
<keyword id="KW-0963">Cytoplasm</keyword>
<keyword id="KW-0444">Lipid biosynthesis</keyword>
<keyword id="KW-0443">Lipid metabolism</keyword>
<keyword id="KW-0594">Phospholipid biosynthesis</keyword>
<keyword id="KW-1208">Phospholipid metabolism</keyword>
<keyword id="KW-1185">Reference proteome</keyword>
<keyword id="KW-0808">Transferase</keyword>
<accession>Q3JAK6</accession>